<protein>
    <recommendedName>
        <fullName evidence="1">Ion-translocating oxidoreductase complex subunit A</fullName>
        <ecNumber evidence="1">7.-.-.-</ecNumber>
    </recommendedName>
    <alternativeName>
        <fullName evidence="1">Rsx electron transport complex subunit A</fullName>
    </alternativeName>
</protein>
<organism>
    <name type="scientific">Shigella flexneri serotype 5b (strain 8401)</name>
    <dbReference type="NCBI Taxonomy" id="373384"/>
    <lineage>
        <taxon>Bacteria</taxon>
        <taxon>Pseudomonadati</taxon>
        <taxon>Pseudomonadota</taxon>
        <taxon>Gammaproteobacteria</taxon>
        <taxon>Enterobacterales</taxon>
        <taxon>Enterobacteriaceae</taxon>
        <taxon>Shigella</taxon>
    </lineage>
</organism>
<feature type="chain" id="PRO_1000013558" description="Ion-translocating oxidoreductase complex subunit A">
    <location>
        <begin position="1"/>
        <end position="193"/>
    </location>
</feature>
<feature type="transmembrane region" description="Helical" evidence="1">
    <location>
        <begin position="5"/>
        <end position="25"/>
    </location>
</feature>
<feature type="transmembrane region" description="Helical" evidence="1">
    <location>
        <begin position="39"/>
        <end position="59"/>
    </location>
</feature>
<feature type="transmembrane region" description="Helical" evidence="1">
    <location>
        <begin position="63"/>
        <end position="83"/>
    </location>
</feature>
<feature type="transmembrane region" description="Helical" evidence="1">
    <location>
        <begin position="102"/>
        <end position="122"/>
    </location>
</feature>
<feature type="transmembrane region" description="Helical" evidence="1">
    <location>
        <begin position="134"/>
        <end position="154"/>
    </location>
</feature>
<feature type="transmembrane region" description="Helical" evidence="1">
    <location>
        <begin position="171"/>
        <end position="191"/>
    </location>
</feature>
<sequence>MTDYLLLFVGTVLVNNFVLVKFLGLCPFMGVSKKLETAMGMGLATTFVMTLTSICAWLIDTWILIPLNLIYLRTLAFILVIAVVVQFTEMVVRKTSPVLYRLLGIFLPLITTNCAVLGVALLNINLGHNFLQSALYGFSAAVGFSLVMVLFAAIRERLAVADVPAPFRGNAIALITAGLMSLAFMGFSGLVKL</sequence>
<dbReference type="EC" id="7.-.-.-" evidence="1"/>
<dbReference type="EMBL" id="CP000266">
    <property type="protein sequence ID" value="ABF03815.1"/>
    <property type="molecule type" value="Genomic_DNA"/>
</dbReference>
<dbReference type="RefSeq" id="WP_000133204.1">
    <property type="nucleotide sequence ID" value="NC_008258.1"/>
</dbReference>
<dbReference type="SMR" id="Q0T4F0"/>
<dbReference type="KEGG" id="sfv:SFV_1644"/>
<dbReference type="HOGENOM" id="CLU_095255_1_0_6"/>
<dbReference type="Proteomes" id="UP000000659">
    <property type="component" value="Chromosome"/>
</dbReference>
<dbReference type="GO" id="GO:0005886">
    <property type="term" value="C:plasma membrane"/>
    <property type="evidence" value="ECO:0007669"/>
    <property type="project" value="UniProtKB-SubCell"/>
</dbReference>
<dbReference type="GO" id="GO:0022900">
    <property type="term" value="P:electron transport chain"/>
    <property type="evidence" value="ECO:0007669"/>
    <property type="project" value="UniProtKB-UniRule"/>
</dbReference>
<dbReference type="HAMAP" id="MF_00459">
    <property type="entry name" value="RsxA_RnfA"/>
    <property type="match status" value="1"/>
</dbReference>
<dbReference type="InterPro" id="IPR011293">
    <property type="entry name" value="Ion_transpt_RnfA/RsxA"/>
</dbReference>
<dbReference type="InterPro" id="IPR003667">
    <property type="entry name" value="NqrDE/RnfAE"/>
</dbReference>
<dbReference type="InterPro" id="IPR050133">
    <property type="entry name" value="NqrDE/RnfAE_oxidrdctase"/>
</dbReference>
<dbReference type="NCBIfam" id="NF003481">
    <property type="entry name" value="PRK05151.1"/>
    <property type="match status" value="1"/>
</dbReference>
<dbReference type="NCBIfam" id="TIGR01943">
    <property type="entry name" value="rnfA"/>
    <property type="match status" value="1"/>
</dbReference>
<dbReference type="PANTHER" id="PTHR30335">
    <property type="entry name" value="INTEGRAL MEMBRANE PROTEIN OF SOXR-REDUCING COMPLEX"/>
    <property type="match status" value="1"/>
</dbReference>
<dbReference type="PANTHER" id="PTHR30335:SF0">
    <property type="entry name" value="ION-TRANSLOCATING OXIDOREDUCTASE COMPLEX SUBUNIT A"/>
    <property type="match status" value="1"/>
</dbReference>
<dbReference type="Pfam" id="PF02508">
    <property type="entry name" value="Rnf-Nqr"/>
    <property type="match status" value="1"/>
</dbReference>
<dbReference type="PIRSF" id="PIRSF006102">
    <property type="entry name" value="NQR_DE"/>
    <property type="match status" value="1"/>
</dbReference>
<reference key="1">
    <citation type="journal article" date="2006" name="BMC Genomics">
        <title>Complete genome sequence of Shigella flexneri 5b and comparison with Shigella flexneri 2a.</title>
        <authorList>
            <person name="Nie H."/>
            <person name="Yang F."/>
            <person name="Zhang X."/>
            <person name="Yang J."/>
            <person name="Chen L."/>
            <person name="Wang J."/>
            <person name="Xiong Z."/>
            <person name="Peng J."/>
            <person name="Sun L."/>
            <person name="Dong J."/>
            <person name="Xue Y."/>
            <person name="Xu X."/>
            <person name="Chen S."/>
            <person name="Yao Z."/>
            <person name="Shen Y."/>
            <person name="Jin Q."/>
        </authorList>
    </citation>
    <scope>NUCLEOTIDE SEQUENCE [LARGE SCALE GENOMIC DNA]</scope>
    <source>
        <strain>8401</strain>
    </source>
</reference>
<comment type="function">
    <text evidence="1">Part of a membrane-bound complex that couples electron transfer with translocation of ions across the membrane. Required to maintain the reduced state of SoxR.</text>
</comment>
<comment type="subunit">
    <text evidence="1">The complex is composed of six subunits: RsxA, RsxB, RsxC, RsxD, RsxE and RsxG.</text>
</comment>
<comment type="subcellular location">
    <subcellularLocation>
        <location evidence="1">Cell inner membrane</location>
        <topology evidence="1">Multi-pass membrane protein</topology>
    </subcellularLocation>
</comment>
<comment type="similarity">
    <text evidence="1">Belongs to the NqrDE/RnfAE family.</text>
</comment>
<accession>Q0T4F0</accession>
<evidence type="ECO:0000255" key="1">
    <source>
        <dbReference type="HAMAP-Rule" id="MF_00459"/>
    </source>
</evidence>
<name>RSXA_SHIF8</name>
<keyword id="KW-0997">Cell inner membrane</keyword>
<keyword id="KW-1003">Cell membrane</keyword>
<keyword id="KW-0249">Electron transport</keyword>
<keyword id="KW-0472">Membrane</keyword>
<keyword id="KW-1278">Translocase</keyword>
<keyword id="KW-0812">Transmembrane</keyword>
<keyword id="KW-1133">Transmembrane helix</keyword>
<keyword id="KW-0813">Transport</keyword>
<proteinExistence type="inferred from homology"/>
<gene>
    <name evidence="1" type="primary">rsxA</name>
    <name type="ordered locus">SFV_1644</name>
</gene>